<accession>C3NEU4</accession>
<protein>
    <recommendedName>
        <fullName evidence="1">A-type ATP synthase subunit E</fullName>
    </recommendedName>
</protein>
<organism>
    <name type="scientific">Saccharolobus islandicus (strain Y.G.57.14 / Yellowstone #1)</name>
    <name type="common">Sulfolobus islandicus</name>
    <dbReference type="NCBI Taxonomy" id="439386"/>
    <lineage>
        <taxon>Archaea</taxon>
        <taxon>Thermoproteota</taxon>
        <taxon>Thermoprotei</taxon>
        <taxon>Sulfolobales</taxon>
        <taxon>Sulfolobaceae</taxon>
        <taxon>Saccharolobus</taxon>
    </lineage>
</organism>
<dbReference type="EMBL" id="CP001403">
    <property type="protein sequence ID" value="ACP45833.1"/>
    <property type="molecule type" value="Genomic_DNA"/>
</dbReference>
<dbReference type="RefSeq" id="WP_012711560.1">
    <property type="nucleotide sequence ID" value="NC_012622.1"/>
</dbReference>
<dbReference type="SMR" id="C3NEU4"/>
<dbReference type="KEGG" id="siy:YG5714_1571"/>
<dbReference type="HOGENOM" id="CLU_1412391_0_0_2"/>
<dbReference type="Proteomes" id="UP000002308">
    <property type="component" value="Chromosome"/>
</dbReference>
<dbReference type="GO" id="GO:0005886">
    <property type="term" value="C:plasma membrane"/>
    <property type="evidence" value="ECO:0007669"/>
    <property type="project" value="UniProtKB-SubCell"/>
</dbReference>
<dbReference type="GO" id="GO:0033178">
    <property type="term" value="C:proton-transporting two-sector ATPase complex, catalytic domain"/>
    <property type="evidence" value="ECO:0007669"/>
    <property type="project" value="InterPro"/>
</dbReference>
<dbReference type="GO" id="GO:0005524">
    <property type="term" value="F:ATP binding"/>
    <property type="evidence" value="ECO:0007669"/>
    <property type="project" value="UniProtKB-UniRule"/>
</dbReference>
<dbReference type="GO" id="GO:0046933">
    <property type="term" value="F:proton-transporting ATP synthase activity, rotational mechanism"/>
    <property type="evidence" value="ECO:0007669"/>
    <property type="project" value="UniProtKB-UniRule"/>
</dbReference>
<dbReference type="GO" id="GO:0046961">
    <property type="term" value="F:proton-transporting ATPase activity, rotational mechanism"/>
    <property type="evidence" value="ECO:0007669"/>
    <property type="project" value="InterPro"/>
</dbReference>
<dbReference type="GO" id="GO:0042777">
    <property type="term" value="P:proton motive force-driven plasma membrane ATP synthesis"/>
    <property type="evidence" value="ECO:0007669"/>
    <property type="project" value="UniProtKB-UniRule"/>
</dbReference>
<dbReference type="Gene3D" id="3.30.2320.30">
    <property type="entry name" value="ATP synthase, E subunit, C-terminal"/>
    <property type="match status" value="1"/>
</dbReference>
<dbReference type="HAMAP" id="MF_00311">
    <property type="entry name" value="ATP_synth_E_arch"/>
    <property type="match status" value="1"/>
</dbReference>
<dbReference type="InterPro" id="IPR038495">
    <property type="entry name" value="ATPase_E_C"/>
</dbReference>
<dbReference type="InterPro" id="IPR002842">
    <property type="entry name" value="ATPase_V1_Esu"/>
</dbReference>
<dbReference type="Pfam" id="PF01991">
    <property type="entry name" value="vATP-synt_E"/>
    <property type="match status" value="1"/>
</dbReference>
<dbReference type="SUPFAM" id="SSF160527">
    <property type="entry name" value="V-type ATPase subunit E-like"/>
    <property type="match status" value="1"/>
</dbReference>
<sequence length="194" mass="22501">MDFEQLLDKSLNKVREEIKTELSKSLDEAIKLLNEGHTKIIQEYTQRINELITKTKEEIEGEKARLEVENKRTLLVEKEYWINKVYERVLEKIGEVVKTKEYKDAIQSILNKEIKEMEGEKITVYCSPNDKSTVEKVVGNNKNVTIKTDDKMLGGIRIYYEGSGLTRDFSLKLILDQVFDSMRGKISDMLFGGK</sequence>
<comment type="function">
    <text evidence="1">Component of the A-type ATP synthase that produces ATP from ADP in the presence of a proton gradient across the membrane.</text>
</comment>
<comment type="subunit">
    <text evidence="1">Has multiple subunits with at least A(3), B(3), C, D, E, F, H, I and proteolipid K(x).</text>
</comment>
<comment type="subcellular location">
    <subcellularLocation>
        <location evidence="1">Cell membrane</location>
        <topology evidence="1">Peripheral membrane protein</topology>
    </subcellularLocation>
</comment>
<comment type="similarity">
    <text evidence="1">Belongs to the V-ATPase E subunit family.</text>
</comment>
<gene>
    <name evidence="1" type="primary">atpE</name>
    <name type="ordered locus">YG5714_1571</name>
</gene>
<feature type="chain" id="PRO_1000205056" description="A-type ATP synthase subunit E">
    <location>
        <begin position="1"/>
        <end position="194"/>
    </location>
</feature>
<name>AATE_SACI7</name>
<proteinExistence type="inferred from homology"/>
<reference key="1">
    <citation type="journal article" date="2009" name="Proc. Natl. Acad. Sci. U.S.A.">
        <title>Biogeography of the Sulfolobus islandicus pan-genome.</title>
        <authorList>
            <person name="Reno M.L."/>
            <person name="Held N.L."/>
            <person name="Fields C.J."/>
            <person name="Burke P.V."/>
            <person name="Whitaker R.J."/>
        </authorList>
    </citation>
    <scope>NUCLEOTIDE SEQUENCE [LARGE SCALE GENOMIC DNA]</scope>
    <source>
        <strain>Y.G.57.14 / Yellowstone #1</strain>
    </source>
</reference>
<keyword id="KW-0066">ATP synthesis</keyword>
<keyword id="KW-1003">Cell membrane</keyword>
<keyword id="KW-0375">Hydrogen ion transport</keyword>
<keyword id="KW-0406">Ion transport</keyword>
<keyword id="KW-0472">Membrane</keyword>
<keyword id="KW-0813">Transport</keyword>
<evidence type="ECO:0000255" key="1">
    <source>
        <dbReference type="HAMAP-Rule" id="MF_00311"/>
    </source>
</evidence>